<name>OLNB6_BRANA</name>
<dbReference type="EMBL" id="X95554">
    <property type="protein sequence ID" value="CAA64800.1"/>
    <property type="molecule type" value="mRNA"/>
</dbReference>
<dbReference type="EMBL" id="X95559">
    <property type="protein sequence ID" value="CAA64805.1"/>
    <property type="status" value="ALT_INIT"/>
    <property type="molecule type" value="mRNA"/>
</dbReference>
<dbReference type="EMBL" id="Y08986">
    <property type="protein sequence ID" value="CAA70173.1"/>
    <property type="molecule type" value="Genomic_DNA"/>
</dbReference>
<dbReference type="PIR" id="T08109">
    <property type="entry name" value="T08109"/>
</dbReference>
<dbReference type="PIR" id="T08132">
    <property type="entry name" value="T08132"/>
</dbReference>
<dbReference type="PIR" id="T08134">
    <property type="entry name" value="T08134"/>
</dbReference>
<dbReference type="RefSeq" id="NP_001302642.1">
    <property type="nucleotide sequence ID" value="NM_001315713.1"/>
</dbReference>
<dbReference type="SMR" id="Q43402"/>
<dbReference type="GeneID" id="106443049"/>
<dbReference type="KEGG" id="bna:106443049"/>
<dbReference type="OrthoDB" id="1112849at2759"/>
<dbReference type="GO" id="GO:0016020">
    <property type="term" value="C:membrane"/>
    <property type="evidence" value="ECO:0007669"/>
    <property type="project" value="UniProtKB-SubCell"/>
</dbReference>
<dbReference type="GO" id="GO:0012511">
    <property type="term" value="C:monolayer-surrounded lipid storage body"/>
    <property type="evidence" value="ECO:0007669"/>
    <property type="project" value="InterPro"/>
</dbReference>
<dbReference type="GO" id="GO:0009791">
    <property type="term" value="P:post-embryonic development"/>
    <property type="evidence" value="ECO:0007669"/>
    <property type="project" value="UniProtKB-ARBA"/>
</dbReference>
<dbReference type="GO" id="GO:0048608">
    <property type="term" value="P:reproductive structure development"/>
    <property type="evidence" value="ECO:0007669"/>
    <property type="project" value="UniProtKB-ARBA"/>
</dbReference>
<dbReference type="InterPro" id="IPR000136">
    <property type="entry name" value="Oleosin"/>
</dbReference>
<dbReference type="PANTHER" id="PTHR33203:SF26">
    <property type="entry name" value="GLYCINE-RICH PROTEIN-RELATED"/>
    <property type="match status" value="1"/>
</dbReference>
<dbReference type="PANTHER" id="PTHR33203">
    <property type="entry name" value="OLEOSIN"/>
    <property type="match status" value="1"/>
</dbReference>
<dbReference type="Pfam" id="PF01277">
    <property type="entry name" value="Oleosin"/>
    <property type="match status" value="1"/>
</dbReference>
<gene>
    <name evidence="8" type="primary">OlnB6</name>
    <name evidence="8" type="synonym">OlnB11</name>
    <name evidence="9" type="synonym">OlnB13</name>
</gene>
<comment type="function">
    <text evidence="5 7">Many of the major pollen coat proteins are derived from endoproteolytic cleavage of oleosin-like proteins.</text>
</comment>
<comment type="subcellular location">
    <subcellularLocation>
        <location evidence="1">Lipid droplet</location>
    </subcellularLocation>
    <subcellularLocation>
        <location evidence="1">Membrane</location>
        <topology evidence="1">Multi-pass membrane protein</topology>
    </subcellularLocation>
    <text evidence="2">Surface of oil bodies. Oleosins exist at a monolayer lipid/water interface (By similarity).</text>
</comment>
<comment type="alternative products">
    <event type="alternative splicing"/>
    <isoform>
        <id>Q43402-1</id>
        <name evidence="6">1</name>
        <sequence type="displayed"/>
    </isoform>
    <isoform>
        <id>Q43402-2</id>
        <name evidence="5">2</name>
        <sequence type="described" ref="VSP_024474"/>
    </isoform>
</comment>
<comment type="tissue specificity">
    <text evidence="5 7">The full-length protein is found in the tapetal lipid bodies of immature anthers, the proteolytically cleaved C-terminal product is found on the coats of pollen grains. Not found in flowers, developing embryos or leaf tissue.</text>
</comment>
<comment type="developmental stage">
    <text evidence="5">Only found in buds 3-5 mm long.</text>
</comment>
<comment type="similarity">
    <text evidence="3">Belongs to the oleosin family.</text>
</comment>
<comment type="sequence caution" evidence="10">
    <conflict type="erroneous initiation">
        <sequence resource="EMBL-CDS" id="CAA64805"/>
    </conflict>
</comment>
<proteinExistence type="evidence at protein level"/>
<feature type="chain" id="PRO_0000273522" description="Oleosin-B6">
    <location>
        <begin position="1"/>
        <end position="375"/>
    </location>
</feature>
<feature type="chain" id="PRO_0000273523" description="Pollen coat protein B6" evidence="5">
    <location>
        <begin position="141"/>
        <end position="375"/>
    </location>
</feature>
<feature type="transmembrane region" description="Helical" evidence="3">
    <location>
        <begin position="21"/>
        <end position="43"/>
    </location>
</feature>
<feature type="transmembrane region" description="Helical" evidence="3">
    <location>
        <begin position="55"/>
        <end position="75"/>
    </location>
</feature>
<feature type="transmembrane region" description="Helical" evidence="3">
    <location>
        <begin position="81"/>
        <end position="101"/>
    </location>
</feature>
<feature type="repeat" description="1" evidence="3">
    <location>
        <begin position="207"/>
        <end position="209"/>
    </location>
</feature>
<feature type="repeat" description="2" evidence="3">
    <location>
        <begin position="210"/>
        <end position="212"/>
    </location>
</feature>
<feature type="repeat" description="3" evidence="3">
    <location>
        <begin position="213"/>
        <end position="215"/>
    </location>
</feature>
<feature type="repeat" description="4" evidence="3">
    <location>
        <begin position="216"/>
        <end position="218"/>
    </location>
</feature>
<feature type="repeat" description="5" evidence="3">
    <location>
        <begin position="219"/>
        <end position="221"/>
    </location>
</feature>
<feature type="repeat" description="6" evidence="3">
    <location>
        <begin position="222"/>
        <end position="224"/>
    </location>
</feature>
<feature type="repeat" description="7" evidence="3">
    <location>
        <begin position="225"/>
        <end position="227"/>
    </location>
</feature>
<feature type="repeat" description="8" evidence="3">
    <location>
        <begin position="228"/>
        <end position="230"/>
    </location>
</feature>
<feature type="repeat" description="9" evidence="3">
    <location>
        <begin position="231"/>
        <end position="233"/>
    </location>
</feature>
<feature type="repeat" description="10" evidence="3">
    <location>
        <begin position="234"/>
        <end position="236"/>
    </location>
</feature>
<feature type="repeat" description="11" evidence="3">
    <location>
        <begin position="237"/>
        <end position="239"/>
    </location>
</feature>
<feature type="repeat" description="12" evidence="3">
    <location>
        <begin position="240"/>
        <end position="242"/>
    </location>
</feature>
<feature type="repeat" description="13" evidence="3">
    <location>
        <begin position="243"/>
        <end position="245"/>
    </location>
</feature>
<feature type="repeat" description="14" evidence="3">
    <location>
        <begin position="246"/>
        <end position="248"/>
    </location>
</feature>
<feature type="repeat" description="15" evidence="3">
    <location>
        <begin position="249"/>
        <end position="251"/>
    </location>
</feature>
<feature type="repeat" description="16" evidence="3">
    <location>
        <begin position="252"/>
        <end position="254"/>
    </location>
</feature>
<feature type="repeat" description="17" evidence="3">
    <location>
        <begin position="255"/>
        <end position="257"/>
    </location>
</feature>
<feature type="repeat" description="18" evidence="3">
    <location>
        <begin position="258"/>
        <end position="260"/>
    </location>
</feature>
<feature type="repeat" description="19" evidence="3">
    <location>
        <begin position="261"/>
        <end position="263"/>
    </location>
</feature>
<feature type="repeat" description="20" evidence="3">
    <location>
        <begin position="264"/>
        <end position="266"/>
    </location>
</feature>
<feature type="repeat" description="21" evidence="3">
    <location>
        <begin position="267"/>
        <end position="269"/>
    </location>
</feature>
<feature type="repeat" description="22" evidence="3">
    <location>
        <begin position="270"/>
        <end position="272"/>
    </location>
</feature>
<feature type="repeat" description="23" evidence="3">
    <location>
        <begin position="273"/>
        <end position="275"/>
    </location>
</feature>
<feature type="region of interest" description="Polar" evidence="3">
    <location>
        <begin position="1"/>
        <end position="32"/>
    </location>
</feature>
<feature type="region of interest" description="Hydrophobic" evidence="3">
    <location>
        <begin position="33"/>
        <end position="112"/>
    </location>
</feature>
<feature type="region of interest" description="Disordered" evidence="4">
    <location>
        <begin position="144"/>
        <end position="284"/>
    </location>
</feature>
<feature type="region of interest" description="23 X 3 AA approximate tandem repeats of P-A-A" evidence="3">
    <location>
        <begin position="207"/>
        <end position="275"/>
    </location>
</feature>
<feature type="region of interest" description="Disordered" evidence="4">
    <location>
        <begin position="303"/>
        <end position="375"/>
    </location>
</feature>
<feature type="compositionally biased region" description="Basic and acidic residues" evidence="4">
    <location>
        <begin position="148"/>
        <end position="179"/>
    </location>
</feature>
<feature type="compositionally biased region" description="Pro residues" evidence="4">
    <location>
        <begin position="193"/>
        <end position="210"/>
    </location>
</feature>
<feature type="compositionally biased region" description="Low complexity" evidence="4">
    <location>
        <begin position="211"/>
        <end position="251"/>
    </location>
</feature>
<feature type="compositionally biased region" description="Pro residues" evidence="4">
    <location>
        <begin position="252"/>
        <end position="280"/>
    </location>
</feature>
<feature type="compositionally biased region" description="Basic residues" evidence="4">
    <location>
        <begin position="316"/>
        <end position="331"/>
    </location>
</feature>
<feature type="splice variant" id="VSP_024474" description="In isoform 2." evidence="8">
    <location>
        <begin position="185"/>
        <end position="345"/>
    </location>
</feature>
<feature type="sequence conflict" description="In Ref. 1; CAA64805/CAA64800." evidence="10" ref="1">
    <original>K</original>
    <variation>E</variation>
    <location>
        <position position="2"/>
    </location>
</feature>
<feature type="sequence conflict" description="In Ref. 1; CAA64805/CAA64800." evidence="10" ref="1">
    <original>QL</original>
    <variation>LS</variation>
    <location>
        <begin position="13"/>
        <end position="14"/>
    </location>
</feature>
<feature type="sequence conflict" description="In Ref. 1; CAA64805." evidence="10" ref="1">
    <original>F</original>
    <variation>Y</variation>
    <location>
        <position position="23"/>
    </location>
</feature>
<feature type="sequence conflict" description="In Ref. 1; CAA64805/CAA64800." evidence="10" ref="1">
    <original>I</original>
    <variation>L</variation>
    <location>
        <position position="28"/>
    </location>
</feature>
<feature type="sequence conflict" description="In Ref. 1; CAA64805." evidence="10" ref="1">
    <original>T</original>
    <variation>S</variation>
    <location>
        <position position="95"/>
    </location>
</feature>
<feature type="sequence conflict" description="In Ref. 1; CAA64805." evidence="10" ref="1">
    <original>K</original>
    <variation>E</variation>
    <location>
        <position position="159"/>
    </location>
</feature>
<feature type="sequence conflict" description="In Ref. 1; CAA64805/CAA64800." evidence="10" ref="1">
    <location>
        <begin position="163"/>
        <end position="165"/>
    </location>
</feature>
<feature type="sequence conflict" description="In Ref. 1; CAA64805." evidence="10" ref="1">
    <original>E</original>
    <variation>D</variation>
    <location>
        <position position="176"/>
    </location>
</feature>
<feature type="sequence conflict" description="In Ref. 1; CAA64805/CAA64800." evidence="10" ref="1">
    <original>EKS</original>
    <variation>DKK</variation>
    <location>
        <begin position="353"/>
        <end position="355"/>
    </location>
</feature>
<feature type="sequence conflict" description="In Ref. 1; CAA64805/CAA64800." evidence="10" ref="1">
    <location>
        <begin position="360"/>
        <end position="364"/>
    </location>
</feature>
<feature type="sequence conflict" description="In Ref. 1; CAA64805/CAA64800." evidence="10" ref="1">
    <original>ES</original>
    <variation>DE</variation>
    <location>
        <begin position="373"/>
        <end position="374"/>
    </location>
</feature>
<evidence type="ECO:0000250" key="1"/>
<evidence type="ECO:0000250" key="2">
    <source>
        <dbReference type="UniProtKB" id="P29526"/>
    </source>
</evidence>
<evidence type="ECO:0000255" key="3"/>
<evidence type="ECO:0000256" key="4">
    <source>
        <dbReference type="SAM" id="MobiDB-lite"/>
    </source>
</evidence>
<evidence type="ECO:0000269" key="5">
    <source>
    </source>
</evidence>
<evidence type="ECO:0000269" key="6">
    <source>
    </source>
</evidence>
<evidence type="ECO:0000269" key="7">
    <source>
    </source>
</evidence>
<evidence type="ECO:0000303" key="8">
    <source>
    </source>
</evidence>
<evidence type="ECO:0000303" key="9">
    <source>
    </source>
</evidence>
<evidence type="ECO:0000305" key="10"/>
<accession>Q43402</accession>
<accession>P93066</accession>
<accession>Q43397</accession>
<protein>
    <recommendedName>
        <fullName>Oleosin-B6</fullName>
    </recommendedName>
    <alternativeName>
        <fullName>Oleosin-B11</fullName>
    </alternativeName>
    <alternativeName>
        <fullName>Oleosin-B13</fullName>
    </alternativeName>
    <component>
        <recommendedName>
            <fullName>Pollen coat protein B6</fullName>
        </recommendedName>
        <alternativeName>
            <fullName>Pollen coat protein B11</fullName>
        </alternativeName>
        <alternativeName>
            <fullName>Pollen coat protein B13</fullName>
        </alternativeName>
    </component>
</protein>
<keyword id="KW-0025">Alternative splicing</keyword>
<keyword id="KW-0903">Direct protein sequencing</keyword>
<keyword id="KW-0551">Lipid droplet</keyword>
<keyword id="KW-0472">Membrane</keyword>
<keyword id="KW-0677">Repeat</keyword>
<keyword id="KW-0812">Transmembrane</keyword>
<keyword id="KW-1133">Transmembrane helix</keyword>
<reference evidence="10" key="1">
    <citation type="journal article" date="1996" name="Plant J.">
        <title>Characterization of anther-expressed genes encoding a major class of extracellular oleosin-like proteins in the pollen coat of Brassicaceae.</title>
        <authorList>
            <person name="Ross J.H.E."/>
            <person name="Murphy D.J."/>
        </authorList>
    </citation>
    <scope>NUCLEOTIDE SEQUENCE [MRNA] (ISOFORM 2)</scope>
    <scope>PROTEIN SEQUENCE OF 141-160</scope>
    <scope>FUNCTION</scope>
    <scope>TISSUE SPECIFICITY</scope>
    <scope>DEVELOPMENTAL STAGE</scope>
    <source>
        <strain evidence="5">cv. Topas</strain>
        <tissue evidence="5">Flower bud</tissue>
        <tissue evidence="5">Pollen</tissue>
    </source>
</reference>
<reference evidence="10" key="2">
    <citation type="journal article" date="1997" name="Plant Mol. Biol.">
        <title>Promoter sequences from two different Brassica napus tapetal oleosin-like genes direct tapetal expression of beta-glucuronidase in transgenic Brassica plants.</title>
        <authorList>
            <person name="Hong H.P."/>
            <person name="Ross J.H.E."/>
            <person name="Gerster J.L."/>
            <person name="Rigas S."/>
            <person name="Datla R.S.S."/>
            <person name="Hatzopoulos P."/>
            <person name="Scoles G."/>
            <person name="Keller W."/>
            <person name="Murphy D.J."/>
            <person name="Robert L.S."/>
        </authorList>
    </citation>
    <scope>NUCLEOTIDE SEQUENCE [GENOMIC DNA] (ISOFORM 1)</scope>
</reference>
<reference evidence="10" key="3">
    <citation type="journal article" date="1998" name="Plant J.">
        <title>Biosynthesis, targeting and processing of oleosin-like proteins, which are major pollen coat components in Brassica napus.</title>
        <authorList>
            <person name="Murphy D.J."/>
            <person name="Ross J.H.E."/>
        </authorList>
    </citation>
    <scope>PROTEIN SEQUENCE OF 141-155</scope>
    <scope>FUNCTION</scope>
    <scope>TISSUE SPECIFICITY</scope>
    <source>
        <strain evidence="7">cv. Topas</strain>
        <tissue evidence="7">Pollen</tissue>
    </source>
</reference>
<sequence length="375" mass="37993">MKEEIQNETAQTQLQREGRMFSFLFPVIEVIKVVMASVASVVFLGFGGVTLACSAVALAVSTPLFIIFSPILVPATIATTLLATGLGAGTTLGVTGMGLLMRLIKHPGKEGAASAPAAQPSFLSLLEMPNFIKSKMLERLIHIPGVGKKSEGRGESKGKKGKKGKSEHGRGKHEGEGKSKGRKGHRMGVNPENNPPPAGAPPTGSPPAAPAAPEAPAAPAAPAAPAAPAAPAAPAAPEDPAAPAAPEAPATPAAPPAPAAAPAPAAPAAPPAPAAPPRPPSFLSLLEMPSFIKSKLIEALINIPGFGKKSNDRGKSKGGKKSKGKGKSNGRGKHEGEGKSKSRKSKSRGKDKEKSKGKGIFGRSSRKGSSDDESS</sequence>
<organism>
    <name type="scientific">Brassica napus</name>
    <name type="common">Rape</name>
    <dbReference type="NCBI Taxonomy" id="3708"/>
    <lineage>
        <taxon>Eukaryota</taxon>
        <taxon>Viridiplantae</taxon>
        <taxon>Streptophyta</taxon>
        <taxon>Embryophyta</taxon>
        <taxon>Tracheophyta</taxon>
        <taxon>Spermatophyta</taxon>
        <taxon>Magnoliopsida</taxon>
        <taxon>eudicotyledons</taxon>
        <taxon>Gunneridae</taxon>
        <taxon>Pentapetalae</taxon>
        <taxon>rosids</taxon>
        <taxon>malvids</taxon>
        <taxon>Brassicales</taxon>
        <taxon>Brassicaceae</taxon>
        <taxon>Brassiceae</taxon>
        <taxon>Brassica</taxon>
    </lineage>
</organism>